<evidence type="ECO:0000255" key="1">
    <source>
        <dbReference type="HAMAP-Rule" id="MF_00021"/>
    </source>
</evidence>
<reference key="1">
    <citation type="journal article" date="2005" name="Proc. Natl. Acad. Sci. U.S.A.">
        <title>Genome analysis of multiple pathogenic isolates of Streptococcus agalactiae: implications for the microbial 'pan-genome'.</title>
        <authorList>
            <person name="Tettelin H."/>
            <person name="Masignani V."/>
            <person name="Cieslewicz M.J."/>
            <person name="Donati C."/>
            <person name="Medini D."/>
            <person name="Ward N.L."/>
            <person name="Angiuoli S.V."/>
            <person name="Crabtree J."/>
            <person name="Jones A.L."/>
            <person name="Durkin A.S."/>
            <person name="DeBoy R.T."/>
            <person name="Davidsen T.M."/>
            <person name="Mora M."/>
            <person name="Scarselli M."/>
            <person name="Margarit y Ros I."/>
            <person name="Peterson J.D."/>
            <person name="Hauser C.R."/>
            <person name="Sundaram J.P."/>
            <person name="Nelson W.C."/>
            <person name="Madupu R."/>
            <person name="Brinkac L.M."/>
            <person name="Dodson R.J."/>
            <person name="Rosovitz M.J."/>
            <person name="Sullivan S.A."/>
            <person name="Daugherty S.C."/>
            <person name="Haft D.H."/>
            <person name="Selengut J."/>
            <person name="Gwinn M.L."/>
            <person name="Zhou L."/>
            <person name="Zafar N."/>
            <person name="Khouri H."/>
            <person name="Radune D."/>
            <person name="Dimitrov G."/>
            <person name="Watkins K."/>
            <person name="O'Connor K.J."/>
            <person name="Smith S."/>
            <person name="Utterback T.R."/>
            <person name="White O."/>
            <person name="Rubens C.E."/>
            <person name="Grandi G."/>
            <person name="Madoff L.C."/>
            <person name="Kasper D.L."/>
            <person name="Telford J.L."/>
            <person name="Wessels M.R."/>
            <person name="Rappuoli R."/>
            <person name="Fraser C.M."/>
        </authorList>
    </citation>
    <scope>NUCLEOTIDE SEQUENCE [LARGE SCALE GENOMIC DNA]</scope>
    <source>
        <strain>ATCC 27591 / A909 / CDC SS700</strain>
    </source>
</reference>
<proteinExistence type="inferred from homology"/>
<keyword id="KW-0067">ATP-binding</keyword>
<keyword id="KW-0963">Cytoplasm</keyword>
<keyword id="KW-0547">Nucleotide-binding</keyword>
<keyword id="KW-0694">RNA-binding</keyword>
<keyword id="KW-0784">Thiamine biosynthesis</keyword>
<keyword id="KW-0808">Transferase</keyword>
<keyword id="KW-0820">tRNA-binding</keyword>
<gene>
    <name evidence="1" type="primary">thiI</name>
    <name type="ordered locus">SAK_1405</name>
</gene>
<sequence>MQYSEIMIRYGELSTKKKNRMRFINKLKNNMEHVLSIYPDVSVKTDRDRGHVYLNGTDYHEVAESLKEIFGIQAFSPSFKVEKNVDTLVKAVQEIMTSVYKDGMTFKITAKRSDHSFELDSRALNHTLGDAVFSVLPNIKAQMKQPDINLKVEIRDEAAYISYENIRGAGGLPVGTSGKGMLMLSGGIDSPVAGYLALKRGVDIEAVHFASPPYTSPGALKKAHALTRKLTKFGGNIQFIEVPFTEIQEEIKEKAPEAYLMTLTRRFMMRITDRIRENRNGLVIINGESLGQVASQTLESMQAINAVTATPIIRPVVTMDKLEIIDIAQKIDTFDISIQPFEDCCTIFAPDRPKTNPKIKNTEQYEKRMDVEGLVERAVAGIMVTTIQPQADSDDVDDLIDDLL</sequence>
<feature type="chain" id="PRO_1000074292" description="Probable tRNA sulfurtransferase">
    <location>
        <begin position="1"/>
        <end position="404"/>
    </location>
</feature>
<feature type="domain" description="THUMP" evidence="1">
    <location>
        <begin position="60"/>
        <end position="165"/>
    </location>
</feature>
<feature type="binding site" evidence="1">
    <location>
        <begin position="183"/>
        <end position="184"/>
    </location>
    <ligand>
        <name>ATP</name>
        <dbReference type="ChEBI" id="CHEBI:30616"/>
    </ligand>
</feature>
<feature type="binding site" evidence="1">
    <location>
        <begin position="208"/>
        <end position="209"/>
    </location>
    <ligand>
        <name>ATP</name>
        <dbReference type="ChEBI" id="CHEBI:30616"/>
    </ligand>
</feature>
<feature type="binding site" evidence="1">
    <location>
        <position position="265"/>
    </location>
    <ligand>
        <name>ATP</name>
        <dbReference type="ChEBI" id="CHEBI:30616"/>
    </ligand>
</feature>
<feature type="binding site" evidence="1">
    <location>
        <position position="287"/>
    </location>
    <ligand>
        <name>ATP</name>
        <dbReference type="ChEBI" id="CHEBI:30616"/>
    </ligand>
</feature>
<feature type="binding site" evidence="1">
    <location>
        <position position="296"/>
    </location>
    <ligand>
        <name>ATP</name>
        <dbReference type="ChEBI" id="CHEBI:30616"/>
    </ligand>
</feature>
<organism>
    <name type="scientific">Streptococcus agalactiae serotype Ia (strain ATCC 27591 / A909 / CDC SS700)</name>
    <dbReference type="NCBI Taxonomy" id="205921"/>
    <lineage>
        <taxon>Bacteria</taxon>
        <taxon>Bacillati</taxon>
        <taxon>Bacillota</taxon>
        <taxon>Bacilli</taxon>
        <taxon>Lactobacillales</taxon>
        <taxon>Streptococcaceae</taxon>
        <taxon>Streptococcus</taxon>
    </lineage>
</organism>
<protein>
    <recommendedName>
        <fullName evidence="1">Probable tRNA sulfurtransferase</fullName>
        <ecNumber evidence="1">2.8.1.4</ecNumber>
    </recommendedName>
    <alternativeName>
        <fullName evidence="1">Sulfur carrier protein ThiS sulfurtransferase</fullName>
    </alternativeName>
    <alternativeName>
        <fullName evidence="1">Thiamine biosynthesis protein ThiI</fullName>
    </alternativeName>
    <alternativeName>
        <fullName evidence="1">tRNA 4-thiouridine synthase</fullName>
    </alternativeName>
</protein>
<dbReference type="EC" id="2.8.1.4" evidence="1"/>
<dbReference type="EMBL" id="CP000114">
    <property type="protein sequence ID" value="ABA45390.1"/>
    <property type="molecule type" value="Genomic_DNA"/>
</dbReference>
<dbReference type="RefSeq" id="WP_001200107.1">
    <property type="nucleotide sequence ID" value="NC_007432.1"/>
</dbReference>
<dbReference type="SMR" id="Q3K0E0"/>
<dbReference type="KEGG" id="sak:SAK_1405"/>
<dbReference type="HOGENOM" id="CLU_037952_4_0_9"/>
<dbReference type="UniPathway" id="UPA00060"/>
<dbReference type="GO" id="GO:0005829">
    <property type="term" value="C:cytosol"/>
    <property type="evidence" value="ECO:0007669"/>
    <property type="project" value="TreeGrafter"/>
</dbReference>
<dbReference type="GO" id="GO:0005524">
    <property type="term" value="F:ATP binding"/>
    <property type="evidence" value="ECO:0007669"/>
    <property type="project" value="UniProtKB-UniRule"/>
</dbReference>
<dbReference type="GO" id="GO:0004810">
    <property type="term" value="F:CCA tRNA nucleotidyltransferase activity"/>
    <property type="evidence" value="ECO:0007669"/>
    <property type="project" value="InterPro"/>
</dbReference>
<dbReference type="GO" id="GO:0000049">
    <property type="term" value="F:tRNA binding"/>
    <property type="evidence" value="ECO:0007669"/>
    <property type="project" value="UniProtKB-UniRule"/>
</dbReference>
<dbReference type="GO" id="GO:0140741">
    <property type="term" value="F:tRNA-uracil-4 sulfurtransferase activity"/>
    <property type="evidence" value="ECO:0007669"/>
    <property type="project" value="UniProtKB-EC"/>
</dbReference>
<dbReference type="GO" id="GO:0009228">
    <property type="term" value="P:thiamine biosynthetic process"/>
    <property type="evidence" value="ECO:0007669"/>
    <property type="project" value="UniProtKB-KW"/>
</dbReference>
<dbReference type="GO" id="GO:0009229">
    <property type="term" value="P:thiamine diphosphate biosynthetic process"/>
    <property type="evidence" value="ECO:0007669"/>
    <property type="project" value="UniProtKB-UniRule"/>
</dbReference>
<dbReference type="GO" id="GO:0052837">
    <property type="term" value="P:thiazole biosynthetic process"/>
    <property type="evidence" value="ECO:0007669"/>
    <property type="project" value="TreeGrafter"/>
</dbReference>
<dbReference type="GO" id="GO:0002937">
    <property type="term" value="P:tRNA 4-thiouridine biosynthesis"/>
    <property type="evidence" value="ECO:0007669"/>
    <property type="project" value="TreeGrafter"/>
</dbReference>
<dbReference type="CDD" id="cd01712">
    <property type="entry name" value="PPase_ThiI"/>
    <property type="match status" value="1"/>
</dbReference>
<dbReference type="CDD" id="cd11716">
    <property type="entry name" value="THUMP_ThiI"/>
    <property type="match status" value="1"/>
</dbReference>
<dbReference type="FunFam" id="3.40.50.620:FF:000053">
    <property type="entry name" value="Probable tRNA sulfurtransferase"/>
    <property type="match status" value="1"/>
</dbReference>
<dbReference type="Gene3D" id="3.30.2130.30">
    <property type="match status" value="1"/>
</dbReference>
<dbReference type="Gene3D" id="3.40.50.620">
    <property type="entry name" value="HUPs"/>
    <property type="match status" value="1"/>
</dbReference>
<dbReference type="HAMAP" id="MF_00021">
    <property type="entry name" value="ThiI"/>
    <property type="match status" value="1"/>
</dbReference>
<dbReference type="InterPro" id="IPR014729">
    <property type="entry name" value="Rossmann-like_a/b/a_fold"/>
</dbReference>
<dbReference type="InterPro" id="IPR020536">
    <property type="entry name" value="ThiI_AANH"/>
</dbReference>
<dbReference type="InterPro" id="IPR054173">
    <property type="entry name" value="ThiI_fer"/>
</dbReference>
<dbReference type="InterPro" id="IPR049961">
    <property type="entry name" value="ThiI_N"/>
</dbReference>
<dbReference type="InterPro" id="IPR004114">
    <property type="entry name" value="THUMP_dom"/>
</dbReference>
<dbReference type="InterPro" id="IPR049962">
    <property type="entry name" value="THUMP_ThiI"/>
</dbReference>
<dbReference type="InterPro" id="IPR003720">
    <property type="entry name" value="tRNA_STrfase"/>
</dbReference>
<dbReference type="InterPro" id="IPR050102">
    <property type="entry name" value="tRNA_sulfurtransferase_ThiI"/>
</dbReference>
<dbReference type="NCBIfam" id="TIGR00342">
    <property type="entry name" value="tRNA uracil 4-sulfurtransferase ThiI"/>
    <property type="match status" value="1"/>
</dbReference>
<dbReference type="PANTHER" id="PTHR43209">
    <property type="entry name" value="TRNA SULFURTRANSFERASE"/>
    <property type="match status" value="1"/>
</dbReference>
<dbReference type="PANTHER" id="PTHR43209:SF1">
    <property type="entry name" value="TRNA SULFURTRANSFERASE"/>
    <property type="match status" value="1"/>
</dbReference>
<dbReference type="Pfam" id="PF02568">
    <property type="entry name" value="ThiI"/>
    <property type="match status" value="1"/>
</dbReference>
<dbReference type="Pfam" id="PF22025">
    <property type="entry name" value="ThiI_fer"/>
    <property type="match status" value="1"/>
</dbReference>
<dbReference type="Pfam" id="PF02926">
    <property type="entry name" value="THUMP"/>
    <property type="match status" value="1"/>
</dbReference>
<dbReference type="SMART" id="SM00981">
    <property type="entry name" value="THUMP"/>
    <property type="match status" value="1"/>
</dbReference>
<dbReference type="SUPFAM" id="SSF52402">
    <property type="entry name" value="Adenine nucleotide alpha hydrolases-like"/>
    <property type="match status" value="1"/>
</dbReference>
<dbReference type="SUPFAM" id="SSF143437">
    <property type="entry name" value="THUMP domain-like"/>
    <property type="match status" value="1"/>
</dbReference>
<dbReference type="PROSITE" id="PS51165">
    <property type="entry name" value="THUMP"/>
    <property type="match status" value="1"/>
</dbReference>
<accession>Q3K0E0</accession>
<name>THII_STRA1</name>
<comment type="function">
    <text evidence="1">Catalyzes the ATP-dependent transfer of a sulfur to tRNA to produce 4-thiouridine in position 8 of tRNAs, which functions as a near-UV photosensor. Also catalyzes the transfer of sulfur to the sulfur carrier protein ThiS, forming ThiS-thiocarboxylate. This is a step in the synthesis of thiazole, in the thiamine biosynthesis pathway. The sulfur is donated as persulfide by IscS.</text>
</comment>
<comment type="catalytic activity">
    <reaction evidence="1">
        <text>[ThiI sulfur-carrier protein]-S-sulfanyl-L-cysteine + a uridine in tRNA + 2 reduced [2Fe-2S]-[ferredoxin] + ATP + H(+) = [ThiI sulfur-carrier protein]-L-cysteine + a 4-thiouridine in tRNA + 2 oxidized [2Fe-2S]-[ferredoxin] + AMP + diphosphate</text>
        <dbReference type="Rhea" id="RHEA:24176"/>
        <dbReference type="Rhea" id="RHEA-COMP:10000"/>
        <dbReference type="Rhea" id="RHEA-COMP:10001"/>
        <dbReference type="Rhea" id="RHEA-COMP:13337"/>
        <dbReference type="Rhea" id="RHEA-COMP:13338"/>
        <dbReference type="Rhea" id="RHEA-COMP:13339"/>
        <dbReference type="Rhea" id="RHEA-COMP:13340"/>
        <dbReference type="ChEBI" id="CHEBI:15378"/>
        <dbReference type="ChEBI" id="CHEBI:29950"/>
        <dbReference type="ChEBI" id="CHEBI:30616"/>
        <dbReference type="ChEBI" id="CHEBI:33019"/>
        <dbReference type="ChEBI" id="CHEBI:33737"/>
        <dbReference type="ChEBI" id="CHEBI:33738"/>
        <dbReference type="ChEBI" id="CHEBI:61963"/>
        <dbReference type="ChEBI" id="CHEBI:65315"/>
        <dbReference type="ChEBI" id="CHEBI:136798"/>
        <dbReference type="ChEBI" id="CHEBI:456215"/>
        <dbReference type="EC" id="2.8.1.4"/>
    </reaction>
</comment>
<comment type="catalytic activity">
    <reaction evidence="1">
        <text>[ThiS sulfur-carrier protein]-C-terminal Gly-Gly-AMP + S-sulfanyl-L-cysteinyl-[cysteine desulfurase] + AH2 = [ThiS sulfur-carrier protein]-C-terminal-Gly-aminoethanethioate + L-cysteinyl-[cysteine desulfurase] + A + AMP + 2 H(+)</text>
        <dbReference type="Rhea" id="RHEA:43340"/>
        <dbReference type="Rhea" id="RHEA-COMP:12157"/>
        <dbReference type="Rhea" id="RHEA-COMP:12158"/>
        <dbReference type="Rhea" id="RHEA-COMP:12910"/>
        <dbReference type="Rhea" id="RHEA-COMP:19908"/>
        <dbReference type="ChEBI" id="CHEBI:13193"/>
        <dbReference type="ChEBI" id="CHEBI:15378"/>
        <dbReference type="ChEBI" id="CHEBI:17499"/>
        <dbReference type="ChEBI" id="CHEBI:29950"/>
        <dbReference type="ChEBI" id="CHEBI:61963"/>
        <dbReference type="ChEBI" id="CHEBI:90618"/>
        <dbReference type="ChEBI" id="CHEBI:232372"/>
        <dbReference type="ChEBI" id="CHEBI:456215"/>
    </reaction>
</comment>
<comment type="pathway">
    <text evidence="1">Cofactor biosynthesis; thiamine diphosphate biosynthesis.</text>
</comment>
<comment type="subcellular location">
    <subcellularLocation>
        <location evidence="1">Cytoplasm</location>
    </subcellularLocation>
</comment>
<comment type="similarity">
    <text evidence="1">Belongs to the ThiI family.</text>
</comment>